<protein>
    <recommendedName>
        <fullName>ABC transporter B family member 6</fullName>
    </recommendedName>
    <alternativeName>
        <fullName>ABC transporter ABCB.6</fullName>
    </alternativeName>
</protein>
<sequence length="678" mass="76921">MGRFGAVSYRQVKQSEADTIEIDSLKNGDIEKYNEENDKISRIPLAQLSINKINGIKSSVIEELSLKRPSYFMATKMIKSLLPYYWKKNPFKFRIILCVSIIFFSKLINLSVPLIFKNIINTLPEKVEWHLLILYGVLFLIQKSIWDIRDLLFQDVNDSATKQINLETFDHLHRLSLSYHLNKRTGSLIKIVERGTSSVVQLLSLLLFNIFPTLVELFTVSTFLLFSYGAEFAFINLTSCVVYIAFTLYVTERRTKHRRLANKKENEASDIKVDSLMNFETIKYFTAESYERKRYDFALMDFFQTNKKSKVSYFLLNFGQSSIIVIGTTLGLGLATWRASQNGFTLGDVIAINTFIAQMFSPLSWLGSSYRMILTAFTDMENLFELLDTQPEVSDSPNAKELNFNDTNNPSKTILPSIEFRNISFTYPNKNKEQQQSSPKILDNISFTVPAGKSIALVGSTGGGKSTIFRLLCRFYDVDQGEILINGENIKDVTQTSLRSIIGVVPQETVLFNDTVAYNIGFGNREANDDQLIDASRRAQILSFIESSPDGFRTVVGERGLRLSGGEKQRVSIARALLKDPPILILDEASSSLDTFTERKIQQAINEVSKGRTTLVIAHRLSTIIHCDEILVLKGGHIVERGSHSYLLDFNGDYAHLWNQQQLSASDLQYTPNQDTFE</sequence>
<evidence type="ECO:0000250" key="1"/>
<evidence type="ECO:0000255" key="2">
    <source>
        <dbReference type="PROSITE-ProRule" id="PRU00434"/>
    </source>
</evidence>
<evidence type="ECO:0000255" key="3">
    <source>
        <dbReference type="PROSITE-ProRule" id="PRU00441"/>
    </source>
</evidence>
<evidence type="ECO:0000305" key="4"/>
<organism>
    <name type="scientific">Dictyostelium discoideum</name>
    <name type="common">Social amoeba</name>
    <dbReference type="NCBI Taxonomy" id="44689"/>
    <lineage>
        <taxon>Eukaryota</taxon>
        <taxon>Amoebozoa</taxon>
        <taxon>Evosea</taxon>
        <taxon>Eumycetozoa</taxon>
        <taxon>Dictyostelia</taxon>
        <taxon>Dictyosteliales</taxon>
        <taxon>Dictyosteliaceae</taxon>
        <taxon>Dictyostelium</taxon>
    </lineage>
</organism>
<proteinExistence type="inferred from homology"/>
<dbReference type="EMBL" id="AAFI02000049">
    <property type="protein sequence ID" value="EAL65909.1"/>
    <property type="molecule type" value="Genomic_DNA"/>
</dbReference>
<dbReference type="RefSeq" id="XP_639260.1">
    <property type="nucleotide sequence ID" value="XM_634168.1"/>
</dbReference>
<dbReference type="SMR" id="Q54RU1"/>
<dbReference type="STRING" id="44689.Q54RU1"/>
<dbReference type="PaxDb" id="44689-DDB0214896"/>
<dbReference type="EnsemblProtists" id="EAL65909">
    <property type="protein sequence ID" value="EAL65909"/>
    <property type="gene ID" value="DDB_G0282931"/>
</dbReference>
<dbReference type="GeneID" id="8623830"/>
<dbReference type="KEGG" id="ddi:DDB_G0282931"/>
<dbReference type="dictyBase" id="DDB_G0282931">
    <property type="gene designation" value="abcB6"/>
</dbReference>
<dbReference type="VEuPathDB" id="AmoebaDB:DDB_G0282931"/>
<dbReference type="eggNOG" id="KOG0056">
    <property type="taxonomic scope" value="Eukaryota"/>
</dbReference>
<dbReference type="HOGENOM" id="CLU_000604_84_1_1"/>
<dbReference type="InParanoid" id="Q54RU1"/>
<dbReference type="OMA" id="VTIYMAK"/>
<dbReference type="PhylomeDB" id="Q54RU1"/>
<dbReference type="Reactome" id="R-DDI-1369007">
    <property type="pathway name" value="Mitochondrial ABC transporters"/>
</dbReference>
<dbReference type="Reactome" id="R-DDI-159418">
    <property type="pathway name" value="Recycling of bile acids and salts"/>
</dbReference>
<dbReference type="Reactome" id="R-DDI-193368">
    <property type="pathway name" value="Synthesis of bile acids and bile salts via 7alpha-hydroxycholesterol"/>
</dbReference>
<dbReference type="Reactome" id="R-DDI-382556">
    <property type="pathway name" value="ABC-family proteins mediated transport"/>
</dbReference>
<dbReference type="Reactome" id="R-DDI-9754706">
    <property type="pathway name" value="Atorvastatin ADME"/>
</dbReference>
<dbReference type="Reactome" id="R-DDI-9757110">
    <property type="pathway name" value="Prednisone ADME"/>
</dbReference>
<dbReference type="PRO" id="PR:Q54RU1"/>
<dbReference type="Proteomes" id="UP000002195">
    <property type="component" value="Chromosome 4"/>
</dbReference>
<dbReference type="GO" id="GO:0016020">
    <property type="term" value="C:membrane"/>
    <property type="evidence" value="ECO:0000318"/>
    <property type="project" value="GO_Central"/>
</dbReference>
<dbReference type="GO" id="GO:0140359">
    <property type="term" value="F:ABC-type transporter activity"/>
    <property type="evidence" value="ECO:0007669"/>
    <property type="project" value="InterPro"/>
</dbReference>
<dbReference type="GO" id="GO:0005524">
    <property type="term" value="F:ATP binding"/>
    <property type="evidence" value="ECO:0007669"/>
    <property type="project" value="UniProtKB-KW"/>
</dbReference>
<dbReference type="GO" id="GO:0016887">
    <property type="term" value="F:ATP hydrolysis activity"/>
    <property type="evidence" value="ECO:0007669"/>
    <property type="project" value="InterPro"/>
</dbReference>
<dbReference type="GO" id="GO:0042626">
    <property type="term" value="F:ATPase-coupled transmembrane transporter activity"/>
    <property type="evidence" value="ECO:0000318"/>
    <property type="project" value="GO_Central"/>
</dbReference>
<dbReference type="GO" id="GO:0055085">
    <property type="term" value="P:transmembrane transport"/>
    <property type="evidence" value="ECO:0000318"/>
    <property type="project" value="GO_Central"/>
</dbReference>
<dbReference type="CDD" id="cd18560">
    <property type="entry name" value="ABC_6TM_ATM1_ABCB7_HMT1_ABCB6"/>
    <property type="match status" value="1"/>
</dbReference>
<dbReference type="FunFam" id="1.20.1560.10:FF:000453">
    <property type="entry name" value="ABC transporter B family member 6"/>
    <property type="match status" value="1"/>
</dbReference>
<dbReference type="FunFam" id="3.40.50.300:FF:000287">
    <property type="entry name" value="Multidrug ABC transporter ATP-binding protein"/>
    <property type="match status" value="1"/>
</dbReference>
<dbReference type="Gene3D" id="1.20.1560.10">
    <property type="entry name" value="ABC transporter type 1, transmembrane domain"/>
    <property type="match status" value="1"/>
</dbReference>
<dbReference type="Gene3D" id="3.40.50.300">
    <property type="entry name" value="P-loop containing nucleotide triphosphate hydrolases"/>
    <property type="match status" value="1"/>
</dbReference>
<dbReference type="InterPro" id="IPR003593">
    <property type="entry name" value="AAA+_ATPase"/>
</dbReference>
<dbReference type="InterPro" id="IPR011527">
    <property type="entry name" value="ABC1_TM_dom"/>
</dbReference>
<dbReference type="InterPro" id="IPR036640">
    <property type="entry name" value="ABC1_TM_sf"/>
</dbReference>
<dbReference type="InterPro" id="IPR003439">
    <property type="entry name" value="ABC_transporter-like_ATP-bd"/>
</dbReference>
<dbReference type="InterPro" id="IPR017871">
    <property type="entry name" value="ABC_transporter-like_CS"/>
</dbReference>
<dbReference type="InterPro" id="IPR027417">
    <property type="entry name" value="P-loop_NTPase"/>
</dbReference>
<dbReference type="InterPro" id="IPR039421">
    <property type="entry name" value="Type_1_exporter"/>
</dbReference>
<dbReference type="PANTHER" id="PTHR24221:SF610">
    <property type="entry name" value="ABC TRANSPORTER B FAMILY MEMBER 6"/>
    <property type="match status" value="1"/>
</dbReference>
<dbReference type="PANTHER" id="PTHR24221">
    <property type="entry name" value="ATP-BINDING CASSETTE SUB-FAMILY B"/>
    <property type="match status" value="1"/>
</dbReference>
<dbReference type="Pfam" id="PF00664">
    <property type="entry name" value="ABC_membrane"/>
    <property type="match status" value="1"/>
</dbReference>
<dbReference type="Pfam" id="PF00005">
    <property type="entry name" value="ABC_tran"/>
    <property type="match status" value="1"/>
</dbReference>
<dbReference type="SMART" id="SM00382">
    <property type="entry name" value="AAA"/>
    <property type="match status" value="1"/>
</dbReference>
<dbReference type="SUPFAM" id="SSF90123">
    <property type="entry name" value="ABC transporter transmembrane region"/>
    <property type="match status" value="1"/>
</dbReference>
<dbReference type="SUPFAM" id="SSF52540">
    <property type="entry name" value="P-loop containing nucleoside triphosphate hydrolases"/>
    <property type="match status" value="1"/>
</dbReference>
<dbReference type="PROSITE" id="PS50929">
    <property type="entry name" value="ABC_TM1F"/>
    <property type="match status" value="1"/>
</dbReference>
<dbReference type="PROSITE" id="PS00211">
    <property type="entry name" value="ABC_TRANSPORTER_1"/>
    <property type="match status" value="1"/>
</dbReference>
<dbReference type="PROSITE" id="PS50893">
    <property type="entry name" value="ABC_TRANSPORTER_2"/>
    <property type="match status" value="1"/>
</dbReference>
<gene>
    <name type="primary">abcB6</name>
    <name type="ORF">DDB_G0282931</name>
</gene>
<keyword id="KW-0067">ATP-binding</keyword>
<keyword id="KW-0472">Membrane</keyword>
<keyword id="KW-0547">Nucleotide-binding</keyword>
<keyword id="KW-1185">Reference proteome</keyword>
<keyword id="KW-0812">Transmembrane</keyword>
<keyword id="KW-1133">Transmembrane helix</keyword>
<keyword id="KW-0813">Transport</keyword>
<reference key="1">
    <citation type="journal article" date="2005" name="Nature">
        <title>The genome of the social amoeba Dictyostelium discoideum.</title>
        <authorList>
            <person name="Eichinger L."/>
            <person name="Pachebat J.A."/>
            <person name="Gloeckner G."/>
            <person name="Rajandream M.A."/>
            <person name="Sucgang R."/>
            <person name="Berriman M."/>
            <person name="Song J."/>
            <person name="Olsen R."/>
            <person name="Szafranski K."/>
            <person name="Xu Q."/>
            <person name="Tunggal B."/>
            <person name="Kummerfeld S."/>
            <person name="Madera M."/>
            <person name="Konfortov B.A."/>
            <person name="Rivero F."/>
            <person name="Bankier A.T."/>
            <person name="Lehmann R."/>
            <person name="Hamlin N."/>
            <person name="Davies R."/>
            <person name="Gaudet P."/>
            <person name="Fey P."/>
            <person name="Pilcher K."/>
            <person name="Chen G."/>
            <person name="Saunders D."/>
            <person name="Sodergren E.J."/>
            <person name="Davis P."/>
            <person name="Kerhornou A."/>
            <person name="Nie X."/>
            <person name="Hall N."/>
            <person name="Anjard C."/>
            <person name="Hemphill L."/>
            <person name="Bason N."/>
            <person name="Farbrother P."/>
            <person name="Desany B."/>
            <person name="Just E."/>
            <person name="Morio T."/>
            <person name="Rost R."/>
            <person name="Churcher C.M."/>
            <person name="Cooper J."/>
            <person name="Haydock S."/>
            <person name="van Driessche N."/>
            <person name="Cronin A."/>
            <person name="Goodhead I."/>
            <person name="Muzny D.M."/>
            <person name="Mourier T."/>
            <person name="Pain A."/>
            <person name="Lu M."/>
            <person name="Harper D."/>
            <person name="Lindsay R."/>
            <person name="Hauser H."/>
            <person name="James K.D."/>
            <person name="Quiles M."/>
            <person name="Madan Babu M."/>
            <person name="Saito T."/>
            <person name="Buchrieser C."/>
            <person name="Wardroper A."/>
            <person name="Felder M."/>
            <person name="Thangavelu M."/>
            <person name="Johnson D."/>
            <person name="Knights A."/>
            <person name="Loulseged H."/>
            <person name="Mungall K.L."/>
            <person name="Oliver K."/>
            <person name="Price C."/>
            <person name="Quail M.A."/>
            <person name="Urushihara H."/>
            <person name="Hernandez J."/>
            <person name="Rabbinowitsch E."/>
            <person name="Steffen D."/>
            <person name="Sanders M."/>
            <person name="Ma J."/>
            <person name="Kohara Y."/>
            <person name="Sharp S."/>
            <person name="Simmonds M.N."/>
            <person name="Spiegler S."/>
            <person name="Tivey A."/>
            <person name="Sugano S."/>
            <person name="White B."/>
            <person name="Walker D."/>
            <person name="Woodward J.R."/>
            <person name="Winckler T."/>
            <person name="Tanaka Y."/>
            <person name="Shaulsky G."/>
            <person name="Schleicher M."/>
            <person name="Weinstock G.M."/>
            <person name="Rosenthal A."/>
            <person name="Cox E.C."/>
            <person name="Chisholm R.L."/>
            <person name="Gibbs R.A."/>
            <person name="Loomis W.F."/>
            <person name="Platzer M."/>
            <person name="Kay R.R."/>
            <person name="Williams J.G."/>
            <person name="Dear P.H."/>
            <person name="Noegel A.A."/>
            <person name="Barrell B.G."/>
            <person name="Kuspa A."/>
        </authorList>
    </citation>
    <scope>NUCLEOTIDE SEQUENCE [LARGE SCALE GENOMIC DNA]</scope>
    <source>
        <strain>AX4</strain>
    </source>
</reference>
<name>ABCB6_DICDI</name>
<accession>Q54RU1</accession>
<feature type="chain" id="PRO_0000391327" description="ABC transporter B family member 6">
    <location>
        <begin position="1"/>
        <end position="678"/>
    </location>
</feature>
<feature type="transmembrane region" description="Helical" evidence="3">
    <location>
        <begin position="95"/>
        <end position="115"/>
    </location>
</feature>
<feature type="transmembrane region" description="Helical" evidence="3">
    <location>
        <begin position="128"/>
        <end position="148"/>
    </location>
</feature>
<feature type="transmembrane region" description="Helical" evidence="3">
    <location>
        <begin position="206"/>
        <end position="226"/>
    </location>
</feature>
<feature type="transmembrane region" description="Helical" evidence="3">
    <location>
        <begin position="230"/>
        <end position="250"/>
    </location>
</feature>
<feature type="transmembrane region" description="Helical" evidence="3">
    <location>
        <begin position="314"/>
        <end position="334"/>
    </location>
</feature>
<feature type="transmembrane region" description="Helical" evidence="3">
    <location>
        <begin position="346"/>
        <end position="366"/>
    </location>
</feature>
<feature type="domain" description="ABC transmembrane type-1" evidence="3">
    <location>
        <begin position="95"/>
        <end position="375"/>
    </location>
</feature>
<feature type="domain" description="ABC transporter" evidence="2">
    <location>
        <begin position="418"/>
        <end position="660"/>
    </location>
</feature>
<feature type="binding site" evidence="1">
    <location>
        <position position="427"/>
    </location>
    <ligand>
        <name>ATP</name>
        <dbReference type="ChEBI" id="CHEBI:30616"/>
    </ligand>
</feature>
<feature type="binding site" evidence="2">
    <location>
        <begin position="459"/>
        <end position="470"/>
    </location>
    <ligand>
        <name>ATP</name>
        <dbReference type="ChEBI" id="CHEBI:30616"/>
    </ligand>
</feature>
<comment type="subcellular location">
    <subcellularLocation>
        <location evidence="3">Membrane</location>
        <topology evidence="3">Multi-pass membrane protein</topology>
    </subcellularLocation>
</comment>
<comment type="similarity">
    <text evidence="4">Belongs to the ABC transporter superfamily. ABCB family. Heavy Metal importer (TC 3.A.1.210) subfamily.</text>
</comment>